<keyword id="KW-1185">Reference proteome</keyword>
<keyword id="KW-0687">Ribonucleoprotein</keyword>
<keyword id="KW-0689">Ribosomal protein</keyword>
<keyword id="KW-0694">RNA-binding</keyword>
<keyword id="KW-0699">rRNA-binding</keyword>
<evidence type="ECO:0000255" key="1">
    <source>
        <dbReference type="HAMAP-Rule" id="MF_01337"/>
    </source>
</evidence>
<evidence type="ECO:0000305" key="2"/>
<organism>
    <name type="scientific">Azorhizobium caulinodans (strain ATCC 43989 / DSM 5975 / JCM 20966 / LMG 6465 / NBRC 14845 / NCIMB 13405 / ORS 571)</name>
    <dbReference type="NCBI Taxonomy" id="438753"/>
    <lineage>
        <taxon>Bacteria</taxon>
        <taxon>Pseudomonadati</taxon>
        <taxon>Pseudomonadota</taxon>
        <taxon>Alphaproteobacteria</taxon>
        <taxon>Hyphomicrobiales</taxon>
        <taxon>Xanthobacteraceae</taxon>
        <taxon>Azorhizobium</taxon>
    </lineage>
</organism>
<feature type="chain" id="PRO_1000073303" description="Large ribosomal subunit protein uL18">
    <location>
        <begin position="1"/>
        <end position="120"/>
    </location>
</feature>
<protein>
    <recommendedName>
        <fullName evidence="1">Large ribosomal subunit protein uL18</fullName>
    </recommendedName>
    <alternativeName>
        <fullName evidence="2">50S ribosomal protein L18</fullName>
    </alternativeName>
</protein>
<accession>A8IAP8</accession>
<comment type="function">
    <text evidence="1">This is one of the proteins that bind and probably mediate the attachment of the 5S RNA into the large ribosomal subunit, where it forms part of the central protuberance.</text>
</comment>
<comment type="subunit">
    <text evidence="1">Part of the 50S ribosomal subunit; part of the 5S rRNA/L5/L18/L25 subcomplex. Contacts the 5S and 23S rRNAs.</text>
</comment>
<comment type="similarity">
    <text evidence="1">Belongs to the universal ribosomal protein uL18 family.</text>
</comment>
<reference key="1">
    <citation type="submission" date="2007-04" db="EMBL/GenBank/DDBJ databases">
        <title>Complete genome sequence of the nitrogen-fixing bacterium Azorhizobium caulinodans ORS571.</title>
        <authorList>
            <person name="Lee K.B."/>
            <person name="Backer P.D."/>
            <person name="Aono T."/>
            <person name="Liu C.T."/>
            <person name="Suzuki S."/>
            <person name="Suzuki T."/>
            <person name="Kaneko T."/>
            <person name="Yamada M."/>
            <person name="Tabata S."/>
            <person name="Kupfer D.M."/>
            <person name="Najar F.Z."/>
            <person name="Wiley G.B."/>
            <person name="Roe B."/>
            <person name="Binnewies T."/>
            <person name="Ussery D."/>
            <person name="Vereecke D."/>
            <person name="Gevers D."/>
            <person name="Holsters M."/>
            <person name="Oyaizu H."/>
        </authorList>
    </citation>
    <scope>NUCLEOTIDE SEQUENCE [LARGE SCALE GENOMIC DNA]</scope>
    <source>
        <strain>ATCC 43989 / DSM 5975 / JCM 20966 / LMG 6465 / NBRC 14845 / NCIMB 13405 / ORS 571</strain>
    </source>
</reference>
<dbReference type="EMBL" id="AP009384">
    <property type="protein sequence ID" value="BAF88536.1"/>
    <property type="molecule type" value="Genomic_DNA"/>
</dbReference>
<dbReference type="RefSeq" id="WP_012171064.1">
    <property type="nucleotide sequence ID" value="NC_009937.1"/>
</dbReference>
<dbReference type="SMR" id="A8IAP8"/>
<dbReference type="STRING" id="438753.AZC_2538"/>
<dbReference type="KEGG" id="azc:AZC_2538"/>
<dbReference type="eggNOG" id="COG0256">
    <property type="taxonomic scope" value="Bacteria"/>
</dbReference>
<dbReference type="HOGENOM" id="CLU_098841_0_1_5"/>
<dbReference type="Proteomes" id="UP000000270">
    <property type="component" value="Chromosome"/>
</dbReference>
<dbReference type="GO" id="GO:0005737">
    <property type="term" value="C:cytoplasm"/>
    <property type="evidence" value="ECO:0007669"/>
    <property type="project" value="UniProtKB-ARBA"/>
</dbReference>
<dbReference type="GO" id="GO:1990904">
    <property type="term" value="C:ribonucleoprotein complex"/>
    <property type="evidence" value="ECO:0007669"/>
    <property type="project" value="UniProtKB-KW"/>
</dbReference>
<dbReference type="GO" id="GO:0005840">
    <property type="term" value="C:ribosome"/>
    <property type="evidence" value="ECO:0007669"/>
    <property type="project" value="UniProtKB-KW"/>
</dbReference>
<dbReference type="GO" id="GO:0008097">
    <property type="term" value="F:5S rRNA binding"/>
    <property type="evidence" value="ECO:0007669"/>
    <property type="project" value="TreeGrafter"/>
</dbReference>
<dbReference type="GO" id="GO:0003735">
    <property type="term" value="F:structural constituent of ribosome"/>
    <property type="evidence" value="ECO:0007669"/>
    <property type="project" value="InterPro"/>
</dbReference>
<dbReference type="GO" id="GO:0006412">
    <property type="term" value="P:translation"/>
    <property type="evidence" value="ECO:0007669"/>
    <property type="project" value="UniProtKB-UniRule"/>
</dbReference>
<dbReference type="CDD" id="cd00432">
    <property type="entry name" value="Ribosomal_L18_L5e"/>
    <property type="match status" value="1"/>
</dbReference>
<dbReference type="FunFam" id="3.30.420.100:FF:000001">
    <property type="entry name" value="50S ribosomal protein L18"/>
    <property type="match status" value="1"/>
</dbReference>
<dbReference type="Gene3D" id="3.30.420.100">
    <property type="match status" value="1"/>
</dbReference>
<dbReference type="HAMAP" id="MF_01337_B">
    <property type="entry name" value="Ribosomal_uL18_B"/>
    <property type="match status" value="1"/>
</dbReference>
<dbReference type="InterPro" id="IPR004389">
    <property type="entry name" value="Ribosomal_uL18_bac-type"/>
</dbReference>
<dbReference type="InterPro" id="IPR005484">
    <property type="entry name" value="Ribosomal_uL18_bac/euk"/>
</dbReference>
<dbReference type="NCBIfam" id="TIGR00060">
    <property type="entry name" value="L18_bact"/>
    <property type="match status" value="1"/>
</dbReference>
<dbReference type="PANTHER" id="PTHR12899">
    <property type="entry name" value="39S RIBOSOMAL PROTEIN L18, MITOCHONDRIAL"/>
    <property type="match status" value="1"/>
</dbReference>
<dbReference type="PANTHER" id="PTHR12899:SF3">
    <property type="entry name" value="LARGE RIBOSOMAL SUBUNIT PROTEIN UL18M"/>
    <property type="match status" value="1"/>
</dbReference>
<dbReference type="Pfam" id="PF00861">
    <property type="entry name" value="Ribosomal_L18p"/>
    <property type="match status" value="1"/>
</dbReference>
<dbReference type="SUPFAM" id="SSF53137">
    <property type="entry name" value="Translational machinery components"/>
    <property type="match status" value="1"/>
</dbReference>
<name>RL18_AZOC5</name>
<proteinExistence type="inferred from homology"/>
<gene>
    <name evidence="1" type="primary">rplR</name>
    <name type="ordered locus">AZC_2538</name>
</gene>
<sequence>MARDLEALERRKAKVRRAIRAAANGRPRLSVHRTSKHIYAQIIDDAKGETLVAASSLEKDLRSSLKTGADVEAAKAIGKLVAERATAKGVTAVVFDRGAYIYHGRVKALAEGAREGGLQF</sequence>